<dbReference type="EMBL" id="AE014296">
    <property type="protein sequence ID" value="AAF47322.2"/>
    <property type="molecule type" value="Genomic_DNA"/>
</dbReference>
<dbReference type="EMBL" id="AY069723">
    <property type="protein sequence ID" value="AAL39868.1"/>
    <property type="molecule type" value="mRNA"/>
</dbReference>
<dbReference type="RefSeq" id="NP_001261182.1">
    <property type="nucleotide sequence ID" value="NM_001274253.1"/>
</dbReference>
<dbReference type="RefSeq" id="NP_611998.1">
    <property type="nucleotide sequence ID" value="NM_138154.3"/>
</dbReference>
<dbReference type="BioGRID" id="63579">
    <property type="interactions" value="3"/>
</dbReference>
<dbReference type="DIP" id="DIP-19668N"/>
<dbReference type="FunCoup" id="Q9W0V7">
    <property type="interactions" value="1"/>
</dbReference>
<dbReference type="STRING" id="7227.FBpp0302930"/>
<dbReference type="GlyCosmos" id="Q9W0V7">
    <property type="glycosylation" value="8 sites, No reported glycans"/>
</dbReference>
<dbReference type="GlyGen" id="Q9W0V7">
    <property type="glycosylation" value="8 sites"/>
</dbReference>
<dbReference type="PaxDb" id="7227-FBpp0302930"/>
<dbReference type="DNASU" id="38013"/>
<dbReference type="EnsemblMetazoa" id="FBtr0072462">
    <property type="protein sequence ID" value="FBpp0072364"/>
    <property type="gene ID" value="FBgn0052475"/>
</dbReference>
<dbReference type="EnsemblMetazoa" id="FBtr0329896">
    <property type="protein sequence ID" value="FBpp0302930"/>
    <property type="gene ID" value="FBgn0052475"/>
</dbReference>
<dbReference type="GeneID" id="38013"/>
<dbReference type="KEGG" id="dme:Dmel_CG32475"/>
<dbReference type="AGR" id="FB:FBgn0052475"/>
<dbReference type="CTD" id="38013"/>
<dbReference type="FlyBase" id="FBgn0052475">
    <property type="gene designation" value="mthl8"/>
</dbReference>
<dbReference type="VEuPathDB" id="VectorBase:FBgn0052475"/>
<dbReference type="eggNOG" id="ENOG502T9C6">
    <property type="taxonomic scope" value="Eukaryota"/>
</dbReference>
<dbReference type="GeneTree" id="ENSGT00940000170903"/>
<dbReference type="HOGENOM" id="CLU_002753_3_0_1"/>
<dbReference type="InParanoid" id="Q9W0V7"/>
<dbReference type="OMA" id="HPCAFID"/>
<dbReference type="OrthoDB" id="7962923at2759"/>
<dbReference type="PhylomeDB" id="Q9W0V7"/>
<dbReference type="BioGRID-ORCS" id="38013">
    <property type="hits" value="0 hits in 1 CRISPR screen"/>
</dbReference>
<dbReference type="GenomeRNAi" id="38013"/>
<dbReference type="PRO" id="PR:Q9W0V7"/>
<dbReference type="Proteomes" id="UP000000803">
    <property type="component" value="Chromosome 3L"/>
</dbReference>
<dbReference type="Bgee" id="FBgn0052475">
    <property type="expression patterns" value="Expressed in hemocyte (sensu Nematoda and Protostomia) in body wall and 138 other cell types or tissues"/>
</dbReference>
<dbReference type="ExpressionAtlas" id="Q9W0V7">
    <property type="expression patterns" value="baseline and differential"/>
</dbReference>
<dbReference type="GO" id="GO:0016020">
    <property type="term" value="C:membrane"/>
    <property type="evidence" value="ECO:0000250"/>
    <property type="project" value="FlyBase"/>
</dbReference>
<dbReference type="GO" id="GO:0005886">
    <property type="term" value="C:plasma membrane"/>
    <property type="evidence" value="ECO:0000318"/>
    <property type="project" value="GO_Central"/>
</dbReference>
<dbReference type="GO" id="GO:0008528">
    <property type="term" value="F:G protein-coupled peptide receptor activity"/>
    <property type="evidence" value="ECO:0000318"/>
    <property type="project" value="GO_Central"/>
</dbReference>
<dbReference type="GO" id="GO:0004930">
    <property type="term" value="F:G protein-coupled receptor activity"/>
    <property type="evidence" value="ECO:0000250"/>
    <property type="project" value="FlyBase"/>
</dbReference>
<dbReference type="GO" id="GO:0008340">
    <property type="term" value="P:determination of adult lifespan"/>
    <property type="evidence" value="ECO:0000250"/>
    <property type="project" value="UniProtKB"/>
</dbReference>
<dbReference type="GO" id="GO:0007186">
    <property type="term" value="P:G protein-coupled receptor signaling pathway"/>
    <property type="evidence" value="ECO:0000250"/>
    <property type="project" value="FlyBase"/>
</dbReference>
<dbReference type="GO" id="GO:0042594">
    <property type="term" value="P:response to starvation"/>
    <property type="evidence" value="ECO:0000250"/>
    <property type="project" value="UniProtKB"/>
</dbReference>
<dbReference type="CDD" id="cd00251">
    <property type="entry name" value="Mth_Ecto"/>
    <property type="match status" value="1"/>
</dbReference>
<dbReference type="Gene3D" id="2.30.160.11">
    <property type="match status" value="1"/>
</dbReference>
<dbReference type="Gene3D" id="2.170.180.11">
    <property type="entry name" value="Methuselah ectodomain, domain 2"/>
    <property type="match status" value="1"/>
</dbReference>
<dbReference type="Gene3D" id="1.20.1070.10">
    <property type="entry name" value="Rhodopsin 7-helix transmembrane proteins"/>
    <property type="match status" value="1"/>
</dbReference>
<dbReference type="InterPro" id="IPR044860">
    <property type="entry name" value="Methusela_ecto_dom_1"/>
</dbReference>
<dbReference type="InterPro" id="IPR023311">
    <property type="entry name" value="Methusela_ecto_dom_2"/>
</dbReference>
<dbReference type="InterPro" id="IPR010596">
    <property type="entry name" value="Methuselah_N_dom"/>
</dbReference>
<dbReference type="InterPro" id="IPR036272">
    <property type="entry name" value="Methuselah_N_sf"/>
</dbReference>
<dbReference type="InterPro" id="IPR051384">
    <property type="entry name" value="Mth_GPCR"/>
</dbReference>
<dbReference type="PANTHER" id="PTHR47154">
    <property type="entry name" value="G-PROTEIN COUPLED RECEPTOR MTH-RELATED"/>
    <property type="match status" value="1"/>
</dbReference>
<dbReference type="PANTHER" id="PTHR47154:SF2">
    <property type="entry name" value="G-PROTEIN COUPLED RECEPTOR MTH-RELATED"/>
    <property type="match status" value="1"/>
</dbReference>
<dbReference type="Pfam" id="PF06652">
    <property type="entry name" value="Methuselah_N"/>
    <property type="match status" value="1"/>
</dbReference>
<dbReference type="SUPFAM" id="SSF63877">
    <property type="entry name" value="Methuselah ectodomain"/>
    <property type="match status" value="1"/>
</dbReference>
<gene>
    <name type="primary">mthl8</name>
    <name type="ORF">CG32475</name>
</gene>
<organism>
    <name type="scientific">Drosophila melanogaster</name>
    <name type="common">Fruit fly</name>
    <dbReference type="NCBI Taxonomy" id="7227"/>
    <lineage>
        <taxon>Eukaryota</taxon>
        <taxon>Metazoa</taxon>
        <taxon>Ecdysozoa</taxon>
        <taxon>Arthropoda</taxon>
        <taxon>Hexapoda</taxon>
        <taxon>Insecta</taxon>
        <taxon>Pterygota</taxon>
        <taxon>Neoptera</taxon>
        <taxon>Endopterygota</taxon>
        <taxon>Diptera</taxon>
        <taxon>Brachycera</taxon>
        <taxon>Muscomorpha</taxon>
        <taxon>Ephydroidea</taxon>
        <taxon>Drosophilidae</taxon>
        <taxon>Drosophila</taxon>
        <taxon>Sophophora</taxon>
    </lineage>
</organism>
<accession>Q9W0V7</accession>
<accession>Q9W0V8</accession>
<feature type="signal peptide" evidence="2">
    <location>
        <begin position="1"/>
        <end position="21"/>
    </location>
</feature>
<feature type="chain" id="PRO_0000013029" description="Probable G-protein coupled receptor Mth-like 8">
    <location>
        <begin position="22"/>
        <end position="492"/>
    </location>
</feature>
<feature type="topological domain" description="Extracellular" evidence="2">
    <location>
        <begin position="22"/>
        <end position="218"/>
    </location>
</feature>
<feature type="transmembrane region" description="Helical; Name=1" evidence="2">
    <location>
        <begin position="219"/>
        <end position="239"/>
    </location>
</feature>
<feature type="topological domain" description="Cytoplasmic" evidence="2">
    <location>
        <begin position="240"/>
        <end position="245"/>
    </location>
</feature>
<feature type="transmembrane region" description="Helical; Name=2" evidence="2">
    <location>
        <begin position="246"/>
        <end position="266"/>
    </location>
</feature>
<feature type="topological domain" description="Extracellular" evidence="2">
    <location>
        <begin position="267"/>
        <end position="282"/>
    </location>
</feature>
<feature type="transmembrane region" description="Helical; Name=3" evidence="2">
    <location>
        <begin position="283"/>
        <end position="303"/>
    </location>
</feature>
<feature type="topological domain" description="Cytoplasmic" evidence="2">
    <location>
        <begin position="304"/>
        <end position="317"/>
    </location>
</feature>
<feature type="transmembrane region" description="Helical; Name=4" evidence="2">
    <location>
        <begin position="318"/>
        <end position="338"/>
    </location>
</feature>
<feature type="topological domain" description="Extracellular" evidence="2">
    <location>
        <begin position="339"/>
        <end position="362"/>
    </location>
</feature>
<feature type="transmembrane region" description="Helical; Name=5" evidence="2">
    <location>
        <begin position="363"/>
        <end position="383"/>
    </location>
</feature>
<feature type="topological domain" description="Cytoplasmic" evidence="2">
    <location>
        <begin position="384"/>
        <end position="411"/>
    </location>
</feature>
<feature type="transmembrane region" description="Helical; Name=6" evidence="2">
    <location>
        <begin position="412"/>
        <end position="432"/>
    </location>
</feature>
<feature type="topological domain" description="Extracellular" evidence="2">
    <location>
        <begin position="433"/>
        <end position="441"/>
    </location>
</feature>
<feature type="transmembrane region" description="Helical; Name=7" evidence="2">
    <location>
        <begin position="442"/>
        <end position="462"/>
    </location>
</feature>
<feature type="topological domain" description="Cytoplasmic" evidence="2">
    <location>
        <begin position="463"/>
        <end position="492"/>
    </location>
</feature>
<feature type="glycosylation site" description="N-linked (GlcNAc...) asparagine" evidence="2">
    <location>
        <position position="37"/>
    </location>
</feature>
<feature type="glycosylation site" description="N-linked (GlcNAc...) asparagine" evidence="2">
    <location>
        <position position="51"/>
    </location>
</feature>
<feature type="glycosylation site" description="N-linked (GlcNAc...) asparagine" evidence="2">
    <location>
        <position position="129"/>
    </location>
</feature>
<feature type="glycosylation site" description="N-linked (GlcNAc...) asparagine" evidence="2">
    <location>
        <position position="169"/>
    </location>
</feature>
<feature type="glycosylation site" description="N-linked (GlcNAc...) asparagine" evidence="2">
    <location>
        <position position="192"/>
    </location>
</feature>
<feature type="glycosylation site" description="N-linked (GlcNAc...) asparagine" evidence="2">
    <location>
        <position position="275"/>
    </location>
</feature>
<feature type="glycosylation site" description="N-linked (GlcNAc...) asparagine" evidence="2">
    <location>
        <position position="360"/>
    </location>
</feature>
<feature type="glycosylation site" description="N-linked (GlcNAc...) asparagine" evidence="2">
    <location>
        <position position="438"/>
    </location>
</feature>
<feature type="disulfide bond" evidence="1">
    <location>
        <begin position="30"/>
        <end position="82"/>
    </location>
</feature>
<feature type="disulfide bond" evidence="1">
    <location>
        <begin position="84"/>
        <end position="89"/>
    </location>
</feature>
<feature type="disulfide bond" evidence="1">
    <location>
        <begin position="93"/>
        <end position="184"/>
    </location>
</feature>
<feature type="disulfide bond" evidence="1">
    <location>
        <begin position="94"/>
        <end position="107"/>
    </location>
</feature>
<keyword id="KW-1003">Cell membrane</keyword>
<keyword id="KW-1015">Disulfide bond</keyword>
<keyword id="KW-0297">G-protein coupled receptor</keyword>
<keyword id="KW-0325">Glycoprotein</keyword>
<keyword id="KW-0472">Membrane</keyword>
<keyword id="KW-0675">Receptor</keyword>
<keyword id="KW-1185">Reference proteome</keyword>
<keyword id="KW-0732">Signal</keyword>
<keyword id="KW-0807">Transducer</keyword>
<keyword id="KW-0812">Transmembrane</keyword>
<keyword id="KW-1133">Transmembrane helix</keyword>
<comment type="subcellular location">
    <subcellularLocation>
        <location evidence="3">Cell membrane</location>
        <topology evidence="3">Multi-pass membrane protein</topology>
    </subcellularLocation>
</comment>
<comment type="similarity">
    <text evidence="3">Belongs to the G-protein coupled receptor 2 family. Mth subfamily.</text>
</comment>
<reference key="1">
    <citation type="journal article" date="2000" name="Science">
        <title>The genome sequence of Drosophila melanogaster.</title>
        <authorList>
            <person name="Adams M.D."/>
            <person name="Celniker S.E."/>
            <person name="Holt R.A."/>
            <person name="Evans C.A."/>
            <person name="Gocayne J.D."/>
            <person name="Amanatides P.G."/>
            <person name="Scherer S.E."/>
            <person name="Li P.W."/>
            <person name="Hoskins R.A."/>
            <person name="Galle R.F."/>
            <person name="George R.A."/>
            <person name="Lewis S.E."/>
            <person name="Richards S."/>
            <person name="Ashburner M."/>
            <person name="Henderson S.N."/>
            <person name="Sutton G.G."/>
            <person name="Wortman J.R."/>
            <person name="Yandell M.D."/>
            <person name="Zhang Q."/>
            <person name="Chen L.X."/>
            <person name="Brandon R.C."/>
            <person name="Rogers Y.-H.C."/>
            <person name="Blazej R.G."/>
            <person name="Champe M."/>
            <person name="Pfeiffer B.D."/>
            <person name="Wan K.H."/>
            <person name="Doyle C."/>
            <person name="Baxter E.G."/>
            <person name="Helt G."/>
            <person name="Nelson C.R."/>
            <person name="Miklos G.L.G."/>
            <person name="Abril J.F."/>
            <person name="Agbayani A."/>
            <person name="An H.-J."/>
            <person name="Andrews-Pfannkoch C."/>
            <person name="Baldwin D."/>
            <person name="Ballew R.M."/>
            <person name="Basu A."/>
            <person name="Baxendale J."/>
            <person name="Bayraktaroglu L."/>
            <person name="Beasley E.M."/>
            <person name="Beeson K.Y."/>
            <person name="Benos P.V."/>
            <person name="Berman B.P."/>
            <person name="Bhandari D."/>
            <person name="Bolshakov S."/>
            <person name="Borkova D."/>
            <person name="Botchan M.R."/>
            <person name="Bouck J."/>
            <person name="Brokstein P."/>
            <person name="Brottier P."/>
            <person name="Burtis K.C."/>
            <person name="Busam D.A."/>
            <person name="Butler H."/>
            <person name="Cadieu E."/>
            <person name="Center A."/>
            <person name="Chandra I."/>
            <person name="Cherry J.M."/>
            <person name="Cawley S."/>
            <person name="Dahlke C."/>
            <person name="Davenport L.B."/>
            <person name="Davies P."/>
            <person name="de Pablos B."/>
            <person name="Delcher A."/>
            <person name="Deng Z."/>
            <person name="Mays A.D."/>
            <person name="Dew I."/>
            <person name="Dietz S.M."/>
            <person name="Dodson K."/>
            <person name="Doup L.E."/>
            <person name="Downes M."/>
            <person name="Dugan-Rocha S."/>
            <person name="Dunkov B.C."/>
            <person name="Dunn P."/>
            <person name="Durbin K.J."/>
            <person name="Evangelista C.C."/>
            <person name="Ferraz C."/>
            <person name="Ferriera S."/>
            <person name="Fleischmann W."/>
            <person name="Fosler C."/>
            <person name="Gabrielian A.E."/>
            <person name="Garg N.S."/>
            <person name="Gelbart W.M."/>
            <person name="Glasser K."/>
            <person name="Glodek A."/>
            <person name="Gong F."/>
            <person name="Gorrell J.H."/>
            <person name="Gu Z."/>
            <person name="Guan P."/>
            <person name="Harris M."/>
            <person name="Harris N.L."/>
            <person name="Harvey D.A."/>
            <person name="Heiman T.J."/>
            <person name="Hernandez J.R."/>
            <person name="Houck J."/>
            <person name="Hostin D."/>
            <person name="Houston K.A."/>
            <person name="Howland T.J."/>
            <person name="Wei M.-H."/>
            <person name="Ibegwam C."/>
            <person name="Jalali M."/>
            <person name="Kalush F."/>
            <person name="Karpen G.H."/>
            <person name="Ke Z."/>
            <person name="Kennison J.A."/>
            <person name="Ketchum K.A."/>
            <person name="Kimmel B.E."/>
            <person name="Kodira C.D."/>
            <person name="Kraft C.L."/>
            <person name="Kravitz S."/>
            <person name="Kulp D."/>
            <person name="Lai Z."/>
            <person name="Lasko P."/>
            <person name="Lei Y."/>
            <person name="Levitsky A.A."/>
            <person name="Li J.H."/>
            <person name="Li Z."/>
            <person name="Liang Y."/>
            <person name="Lin X."/>
            <person name="Liu X."/>
            <person name="Mattei B."/>
            <person name="McIntosh T.C."/>
            <person name="McLeod M.P."/>
            <person name="McPherson D."/>
            <person name="Merkulov G."/>
            <person name="Milshina N.V."/>
            <person name="Mobarry C."/>
            <person name="Morris J."/>
            <person name="Moshrefi A."/>
            <person name="Mount S.M."/>
            <person name="Moy M."/>
            <person name="Murphy B."/>
            <person name="Murphy L."/>
            <person name="Muzny D.M."/>
            <person name="Nelson D.L."/>
            <person name="Nelson D.R."/>
            <person name="Nelson K.A."/>
            <person name="Nixon K."/>
            <person name="Nusskern D.R."/>
            <person name="Pacleb J.M."/>
            <person name="Palazzolo M."/>
            <person name="Pittman G.S."/>
            <person name="Pan S."/>
            <person name="Pollard J."/>
            <person name="Puri V."/>
            <person name="Reese M.G."/>
            <person name="Reinert K."/>
            <person name="Remington K."/>
            <person name="Saunders R.D.C."/>
            <person name="Scheeler F."/>
            <person name="Shen H."/>
            <person name="Shue B.C."/>
            <person name="Siden-Kiamos I."/>
            <person name="Simpson M."/>
            <person name="Skupski M.P."/>
            <person name="Smith T.J."/>
            <person name="Spier E."/>
            <person name="Spradling A.C."/>
            <person name="Stapleton M."/>
            <person name="Strong R."/>
            <person name="Sun E."/>
            <person name="Svirskas R."/>
            <person name="Tector C."/>
            <person name="Turner R."/>
            <person name="Venter E."/>
            <person name="Wang A.H."/>
            <person name="Wang X."/>
            <person name="Wang Z.-Y."/>
            <person name="Wassarman D.A."/>
            <person name="Weinstock G.M."/>
            <person name="Weissenbach J."/>
            <person name="Williams S.M."/>
            <person name="Woodage T."/>
            <person name="Worley K.C."/>
            <person name="Wu D."/>
            <person name="Yang S."/>
            <person name="Yao Q.A."/>
            <person name="Ye J."/>
            <person name="Yeh R.-F."/>
            <person name="Zaveri J.S."/>
            <person name="Zhan M."/>
            <person name="Zhang G."/>
            <person name="Zhao Q."/>
            <person name="Zheng L."/>
            <person name="Zheng X.H."/>
            <person name="Zhong F.N."/>
            <person name="Zhong W."/>
            <person name="Zhou X."/>
            <person name="Zhu S.C."/>
            <person name="Zhu X."/>
            <person name="Smith H.O."/>
            <person name="Gibbs R.A."/>
            <person name="Myers E.W."/>
            <person name="Rubin G.M."/>
            <person name="Venter J.C."/>
        </authorList>
    </citation>
    <scope>NUCLEOTIDE SEQUENCE [LARGE SCALE GENOMIC DNA]</scope>
    <source>
        <strain>Berkeley</strain>
    </source>
</reference>
<reference key="2">
    <citation type="journal article" date="2002" name="Genome Biol.">
        <title>Annotation of the Drosophila melanogaster euchromatic genome: a systematic review.</title>
        <authorList>
            <person name="Misra S."/>
            <person name="Crosby M.A."/>
            <person name="Mungall C.J."/>
            <person name="Matthews B.B."/>
            <person name="Campbell K.S."/>
            <person name="Hradecky P."/>
            <person name="Huang Y."/>
            <person name="Kaminker J.S."/>
            <person name="Millburn G.H."/>
            <person name="Prochnik S.E."/>
            <person name="Smith C.D."/>
            <person name="Tupy J.L."/>
            <person name="Whitfield E.J."/>
            <person name="Bayraktaroglu L."/>
            <person name="Berman B.P."/>
            <person name="Bettencourt B.R."/>
            <person name="Celniker S.E."/>
            <person name="de Grey A.D.N.J."/>
            <person name="Drysdale R.A."/>
            <person name="Harris N.L."/>
            <person name="Richter J."/>
            <person name="Russo S."/>
            <person name="Schroeder A.J."/>
            <person name="Shu S.Q."/>
            <person name="Stapleton M."/>
            <person name="Yamada C."/>
            <person name="Ashburner M."/>
            <person name="Gelbart W.M."/>
            <person name="Rubin G.M."/>
            <person name="Lewis S.E."/>
        </authorList>
    </citation>
    <scope>GENOME REANNOTATION</scope>
    <source>
        <strain>Berkeley</strain>
    </source>
</reference>
<reference key="3">
    <citation type="journal article" date="2002" name="Genome Biol.">
        <title>A Drosophila full-length cDNA resource.</title>
        <authorList>
            <person name="Stapleton M."/>
            <person name="Carlson J.W."/>
            <person name="Brokstein P."/>
            <person name="Yu C."/>
            <person name="Champe M."/>
            <person name="George R.A."/>
            <person name="Guarin H."/>
            <person name="Kronmiller B."/>
            <person name="Pacleb J.M."/>
            <person name="Park S."/>
            <person name="Wan K.H."/>
            <person name="Rubin G.M."/>
            <person name="Celniker S.E."/>
        </authorList>
    </citation>
    <scope>NUCLEOTIDE SEQUENCE [LARGE SCALE MRNA]</scope>
    <source>
        <strain>Berkeley</strain>
        <tissue>Larva</tissue>
        <tissue>Pupae</tissue>
    </source>
</reference>
<reference key="4">
    <citation type="journal article" date="2000" name="J. Cell Biol.">
        <title>Drosophila melanogaster G protein-coupled receptors.</title>
        <authorList>
            <person name="Brody T."/>
            <person name="Cravchik A."/>
        </authorList>
    </citation>
    <scope>REVIEW</scope>
</reference>
<proteinExistence type="evidence at transcript level"/>
<sequence length="492" mass="56330">MAQFCILGVLLILSGTHCSWGFHEETHYPCAFIDTANITGSYGLDGPFVHNWTVIPRHFVAVYDFVIENGIRIPASRHLRACVCKTKPCVRICCLRGEIYDLEKRQCLVPVAGVSSLPSHSHMEVELGNGSLRLVKLQPRFSIHVETPCEHMKAVTKGSEYVHWTLHENGTISHRGHIFSKHYCFTPLLHGNSTWEWQPLACAPEKLYFVLGVREWTYAICLLIAILSMFIVLMVYLMCSEMRNSFYGVAIKAYAICMILGYALLAYLTLHNPANLSNAACRILPSLALMNLVLSFYILSFIAFKLYLSFYGVVFTKLMFWLIFTPIVLVAVGWSFFVGFSYYGSRLIFGGDTCWFDPRNWSVMIYFYAPVFVACAISGFFYVLSQIYIRDQPDIETEKSFESIEKNRFKSFWKYFGYTAVVWVVCICSFAFNYYWENRSHLNYAVSFCMAFHGFAALYALIGKNQQIQNFLRRIDNGEDTCENSVPLSSFG</sequence>
<name>MTH8_DROME</name>
<protein>
    <recommendedName>
        <fullName>Probable G-protein coupled receptor Mth-like 8</fullName>
    </recommendedName>
    <alternativeName>
        <fullName>Protein methuselah-like 8</fullName>
    </alternativeName>
</protein>
<evidence type="ECO:0000250" key="1">
    <source>
        <dbReference type="UniProtKB" id="O97148"/>
    </source>
</evidence>
<evidence type="ECO:0000255" key="2"/>
<evidence type="ECO:0000305" key="3"/>